<dbReference type="EMBL" id="AY484582">
    <property type="protein sequence ID" value="AAR33041.1"/>
    <property type="molecule type" value="mRNA"/>
</dbReference>
<dbReference type="EMBL" id="AF498369">
    <property type="protein sequence ID" value="AAQ07265.1"/>
    <property type="molecule type" value="mRNA"/>
</dbReference>
<dbReference type="EMBL" id="BC084108">
    <property type="protein sequence ID" value="AAH84108.1"/>
    <property type="molecule type" value="mRNA"/>
</dbReference>
<dbReference type="EMBL" id="CD326067">
    <property type="status" value="NOT_ANNOTATED_CDS"/>
    <property type="molecule type" value="mRNA"/>
</dbReference>
<dbReference type="EMBL" id="BK004058">
    <property type="protein sequence ID" value="DAA05162.1"/>
    <property type="molecule type" value="mRNA"/>
</dbReference>
<dbReference type="RefSeq" id="NP_001089011.1">
    <molecule id="Q5MY90-1"/>
    <property type="nucleotide sequence ID" value="NM_001095542.1"/>
</dbReference>
<dbReference type="RefSeq" id="XP_018087597.1">
    <molecule id="Q5MY90-2"/>
    <property type="nucleotide sequence ID" value="XM_018232108.1"/>
</dbReference>
<dbReference type="SMR" id="Q5MY90"/>
<dbReference type="GeneID" id="496397"/>
<dbReference type="KEGG" id="xla:496397"/>
<dbReference type="AGR" id="Xenbase:XB-GENE-1011340"/>
<dbReference type="CTD" id="496397"/>
<dbReference type="Xenbase" id="XB-GENE-1011340">
    <property type="gene designation" value="rtn1.S"/>
</dbReference>
<dbReference type="OrthoDB" id="567788at2759"/>
<dbReference type="Proteomes" id="UP000186698">
    <property type="component" value="Chromosome 8S"/>
</dbReference>
<dbReference type="Bgee" id="496397">
    <property type="expression patterns" value="Expressed in brain and 17 other cell types or tissues"/>
</dbReference>
<dbReference type="GO" id="GO:0005789">
    <property type="term" value="C:endoplasmic reticulum membrane"/>
    <property type="evidence" value="ECO:0000250"/>
    <property type="project" value="UniProtKB"/>
</dbReference>
<dbReference type="GO" id="GO:0043005">
    <property type="term" value="C:neuron projection"/>
    <property type="evidence" value="ECO:0000318"/>
    <property type="project" value="GO_Central"/>
</dbReference>
<dbReference type="GO" id="GO:0005634">
    <property type="term" value="C:nucleus"/>
    <property type="evidence" value="ECO:0000250"/>
    <property type="project" value="UniProtKB"/>
</dbReference>
<dbReference type="GO" id="GO:0014069">
    <property type="term" value="C:postsynaptic density"/>
    <property type="evidence" value="ECO:0000318"/>
    <property type="project" value="GO_Central"/>
</dbReference>
<dbReference type="GO" id="GO:0007420">
    <property type="term" value="P:brain development"/>
    <property type="evidence" value="ECO:0000318"/>
    <property type="project" value="GO_Central"/>
</dbReference>
<dbReference type="GO" id="GO:0071787">
    <property type="term" value="P:endoplasmic reticulum tubular network formation"/>
    <property type="evidence" value="ECO:0000318"/>
    <property type="project" value="GO_Central"/>
</dbReference>
<dbReference type="GO" id="GO:0030182">
    <property type="term" value="P:neuron differentiation"/>
    <property type="evidence" value="ECO:0000318"/>
    <property type="project" value="GO_Central"/>
</dbReference>
<dbReference type="FunFam" id="1.20.5.2480:FF:000001">
    <property type="entry name" value="Reticulon"/>
    <property type="match status" value="1"/>
</dbReference>
<dbReference type="Gene3D" id="1.20.5.2480">
    <property type="match status" value="1"/>
</dbReference>
<dbReference type="InterPro" id="IPR003388">
    <property type="entry name" value="Reticulon"/>
</dbReference>
<dbReference type="InterPro" id="IPR046964">
    <property type="entry name" value="RTN1-4"/>
</dbReference>
<dbReference type="PANTHER" id="PTHR45799:SF5">
    <property type="entry name" value="RETICULON-1"/>
    <property type="match status" value="1"/>
</dbReference>
<dbReference type="PANTHER" id="PTHR45799">
    <property type="entry name" value="RETICULON-LIKE PROTEIN"/>
    <property type="match status" value="1"/>
</dbReference>
<dbReference type="Pfam" id="PF02453">
    <property type="entry name" value="Reticulon"/>
    <property type="match status" value="1"/>
</dbReference>
<dbReference type="PROSITE" id="PS50845">
    <property type="entry name" value="RETICULON"/>
    <property type="match status" value="1"/>
</dbReference>
<comment type="function">
    <text evidence="1">Inhibits amyloid precursor protein processing, probably by blocking BACE1 activity.</text>
</comment>
<comment type="subcellular location">
    <subcellularLocation>
        <location evidence="6">Endoplasmic reticulum membrane</location>
        <topology evidence="2">Multi-pass membrane protein</topology>
    </subcellularLocation>
    <subcellularLocation>
        <location evidence="6">Nucleus</location>
    </subcellularLocation>
    <text evidence="6">Mainly localized to the endoplasmic reticulum with some expression in the nucleus and polysome fractions.</text>
</comment>
<comment type="alternative products">
    <event type="alternative splicing"/>
    <isoform>
        <id>Q5MY90-1</id>
        <name evidence="6">A</name>
        <sequence type="displayed"/>
    </isoform>
    <isoform>
        <id>Q5MY90-2</id>
        <name evidence="5 6">C</name>
        <name evidence="6">C.2</name>
        <sequence type="described" ref="VSP_052646 VSP_052647"/>
    </isoform>
</comment>
<comment type="tissue specificity">
    <text evidence="6">Isoform A and isoform C are both expressed in the animal hemisphere (presumptive neural ectoderm) of blastula and gastrula stage embryos, and along the anterior neural border, in the panplacodal primordium, and in the dorsolateral side of archenteron roof of late neurula embryos. At the tailbud stage, expression of the isoforms begin to differ. Isoform A localizes to the cranial placodes including the trigeminal placode, lateral line placode, olfactory placode and otic vesicle. Isoform C localizes to the central nervous system, including the spinal cord, prosencephalon, mesencephalon and rhombencephalon, as well as the lateral line placode, otic vesicle and pronephros.</text>
</comment>
<comment type="developmental stage">
    <text evidence="6">Isoform A and isoform C are expressed both maternally and zygotically.</text>
</comment>
<comment type="induction">
    <text evidence="6">Isoform A is repressed by thyroid hormone.</text>
</comment>
<evidence type="ECO:0000250" key="1">
    <source>
        <dbReference type="UniProtKB" id="Q16799"/>
    </source>
</evidence>
<evidence type="ECO:0000255" key="2"/>
<evidence type="ECO:0000255" key="3">
    <source>
        <dbReference type="PROSITE-ProRule" id="PRU00170"/>
    </source>
</evidence>
<evidence type="ECO:0000256" key="4">
    <source>
        <dbReference type="SAM" id="MobiDB-lite"/>
    </source>
</evidence>
<evidence type="ECO:0000269" key="5">
    <source>
    </source>
</evidence>
<evidence type="ECO:0000269" key="6">
    <source>
    </source>
</evidence>
<evidence type="ECO:0000303" key="7">
    <source>
    </source>
</evidence>
<evidence type="ECO:0000303" key="8">
    <source>
    </source>
</evidence>
<evidence type="ECO:0000303" key="9">
    <source ref="2"/>
</evidence>
<evidence type="ECO:0000305" key="10"/>
<evidence type="ECO:0000312" key="11">
    <source>
        <dbReference type="EMBL" id="AAH84108.1"/>
    </source>
</evidence>
<evidence type="ECO:0000312" key="12">
    <source>
        <dbReference type="EMBL" id="AAR33041.1"/>
    </source>
</evidence>
<evidence type="ECO:0000312" key="13">
    <source>
        <dbReference type="EMBL" id="DAA05162.1"/>
    </source>
</evidence>
<gene>
    <name type="primary">rtn1-b</name>
</gene>
<name>RTN1B_XENLA</name>
<accession>Q5MY90</accession>
<accession>Q5QT55</accession>
<accession>Q5XHE9</accession>
<sequence>MAANPEDFSGWLEGNVAAARRHRGAEEEEGEAAEQGRTIKAQQAGHQPVAMEMTSTDSTNIFHLHDRESKDHDDGLSYTYLSSDKHYISHPDSTYFTGISKKETESLDKKEFSGAGPHSPKEIPTFDSRGLFSSDSGIEMTPAEWSDVNRSLADPIEEEKLEACKYIDIRRSPDMKSQQVVDAGFGANRSNTISQAAPTEQQTYDSVTMSWQKDHYNGNISEYLPYMEEPREDFGLYHSPTSKEPKSAPVTITFTGMETALQTEYPGNQQGKSNKGLRPSPDLVPTVTVSEPEEDSPESLTPPSTDADGYAEPCGSEKQREYGICEDELISAIKAKEGTKRFSSETNDEKQSRSFHAEKQDFTVMSTEATSASHYTKASSAESGDSEIELVSEDQVGAEEAMQSAYMTFSHISGPPPSPASPSIQYSILREEREAELDSELIIESCDGSSASEESPKRDPDSPMMKPMIMDIIEEENLSRTESFEASDFESCSLKEKKLNMENLAESASYLKGKFPAEIRADMPSTKKEEFLPQKKSPEGPAYQSKVIGMTSILGPKPLTFFKKKAIDLLYWRDVKQTGIVFGSILLMLFSLTLFSVVSVIAYLALAALSATISFRIYKSVLQAVQKTDEGHPFKSYLDIEISLSQEQIQKYTGCFQLYTNSIAKELRRLFLVQDLVDSLKFAVLMWLLTYVGALFNGLTLLIMAVVSMFSLPVVYDKYQAQIDQYLGLVRTNMNIIVTKIQAKIPGTKQKE</sequence>
<reference evidence="10 12" key="1">
    <citation type="journal article" date="2007" name="Dev. Dyn.">
        <title>Identification and expression of XRTN1-A and XRTN1-C in Xenopus laevis.</title>
        <authorList>
            <person name="Park E.C."/>
            <person name="Shim S."/>
            <person name="Han J.-K."/>
        </authorList>
    </citation>
    <scope>NUCLEOTIDE SEQUENCE [MRNA] (ISOFORMS A AND C)</scope>
    <scope>SUBCELLULAR LOCATION</scope>
    <scope>TISSUE SPECIFICITY</scope>
    <scope>DEVELOPMENTAL STAGE</scope>
    <scope>INDUCTION</scope>
    <source>
        <tissue evidence="6">Head</tissue>
    </source>
</reference>
<reference evidence="10 11" key="2">
    <citation type="submission" date="2004-10" db="EMBL/GenBank/DDBJ databases">
        <authorList>
            <consortium name="NIH - Xenopus Gene Collection (XGC) project"/>
        </authorList>
    </citation>
    <scope>NUCLEOTIDE SEQUENCE [LARGE SCALE MRNA] (ISOFORM C)</scope>
    <source>
        <tissue evidence="11">Brain</tissue>
        <tissue>Eye</tissue>
    </source>
</reference>
<reference evidence="10 13" key="3">
    <citation type="journal article" date="2005" name="Mol. Biol. Evol.">
        <title>Analysis of the reticulon gene family demonstrates the absence of the neurite growth inhibitor Nogo-A in fish.</title>
        <authorList>
            <person name="Diekmann H."/>
            <person name="Klinger M."/>
            <person name="Oertle T."/>
            <person name="Heinz D."/>
            <person name="Pogoda H.-M."/>
            <person name="Schwab M.E."/>
            <person name="Stuermer C.A.O."/>
        </authorList>
    </citation>
    <scope>IDENTIFICATION (ISOFORM C)</scope>
</reference>
<protein>
    <recommendedName>
        <fullName>Reticulon-1-B</fullName>
    </recommendedName>
    <alternativeName>
        <fullName>RTN1.2</fullName>
        <shortName>xRTN1</shortName>
    </alternativeName>
</protein>
<keyword id="KW-0025">Alternative splicing</keyword>
<keyword id="KW-0256">Endoplasmic reticulum</keyword>
<keyword id="KW-0472">Membrane</keyword>
<keyword id="KW-0539">Nucleus</keyword>
<keyword id="KW-1185">Reference proteome</keyword>
<keyword id="KW-0812">Transmembrane</keyword>
<keyword id="KW-1133">Transmembrane helix</keyword>
<organism>
    <name type="scientific">Xenopus laevis</name>
    <name type="common">African clawed frog</name>
    <dbReference type="NCBI Taxonomy" id="8355"/>
    <lineage>
        <taxon>Eukaryota</taxon>
        <taxon>Metazoa</taxon>
        <taxon>Chordata</taxon>
        <taxon>Craniata</taxon>
        <taxon>Vertebrata</taxon>
        <taxon>Euteleostomi</taxon>
        <taxon>Amphibia</taxon>
        <taxon>Batrachia</taxon>
        <taxon>Anura</taxon>
        <taxon>Pipoidea</taxon>
        <taxon>Pipidae</taxon>
        <taxon>Xenopodinae</taxon>
        <taxon>Xenopus</taxon>
        <taxon>Xenopus</taxon>
    </lineage>
</organism>
<feature type="chain" id="PRO_0000315933" description="Reticulon-1-B">
    <location>
        <begin position="1"/>
        <end position="752"/>
    </location>
</feature>
<feature type="transmembrane region" description="Helical" evidence="2">
    <location>
        <begin position="580"/>
        <end position="600"/>
    </location>
</feature>
<feature type="transmembrane region" description="Helical" evidence="2">
    <location>
        <begin position="684"/>
        <end position="704"/>
    </location>
</feature>
<feature type="domain" description="Reticulon" evidence="3">
    <location>
        <begin position="566"/>
        <end position="752"/>
    </location>
</feature>
<feature type="region of interest" description="Disordered" evidence="4">
    <location>
        <begin position="1"/>
        <end position="57"/>
    </location>
</feature>
<feature type="region of interest" description="Disordered" evidence="4">
    <location>
        <begin position="264"/>
        <end position="319"/>
    </location>
</feature>
<feature type="region of interest" description="Disordered" evidence="4">
    <location>
        <begin position="334"/>
        <end position="424"/>
    </location>
</feature>
<feature type="region of interest" description="Disordered" evidence="4">
    <location>
        <begin position="444"/>
        <end position="465"/>
    </location>
</feature>
<feature type="compositionally biased region" description="Polar residues" evidence="4">
    <location>
        <begin position="264"/>
        <end position="273"/>
    </location>
</feature>
<feature type="compositionally biased region" description="Basic and acidic residues" evidence="4">
    <location>
        <begin position="334"/>
        <end position="361"/>
    </location>
</feature>
<feature type="compositionally biased region" description="Polar residues" evidence="4">
    <location>
        <begin position="363"/>
        <end position="383"/>
    </location>
</feature>
<feature type="splice variant" id="VSP_052646" description="In isoform C." evidence="7 8 9">
    <location>
        <begin position="1"/>
        <end position="545"/>
    </location>
</feature>
<feature type="splice variant" id="VSP_052647" description="In isoform C." evidence="7 8 9">
    <original>KVIGMTSILGPKPLTFFKKK</original>
    <variation>MQASPDSARMECLWSNWKCQ</variation>
    <location>
        <begin position="546"/>
        <end position="565"/>
    </location>
</feature>
<feature type="sequence conflict" description="In Ref. 1; AAQ07265." evidence="10" ref="1">
    <original>D</original>
    <variation>E</variation>
    <location>
        <position position="724"/>
    </location>
</feature>
<proteinExistence type="evidence at transcript level"/>